<accession>Q944L7</accession>
<accession>Q8LG84</accession>
<accession>Q9LPR3</accession>
<protein>
    <recommendedName>
        <fullName evidence="3">Shewanella-like protein phosphatase 2</fullName>
        <shortName evidence="3">AtSLP2</shortName>
        <ecNumber evidence="4">3.1.-.-</ecNumber>
    </recommendedName>
</protein>
<sequence>MSSRENPSGICKSIPKLISSFVDTFVDYSVSGIFLPQDPSSQNEILQTRFEKPERLVAIGDLHGDLEKSREAFKIAGLIDSSDRWTGGSTMVVQVGDVLDRGGEELKILYFLEKLKREAERAGGKILTMNGNHEIMNIEGDFRYVTKKGLEEFQIWADWYCLGNKMKTLCSGLDKPKDPYEGIPMSFPRMRADCFEGIRARIAALRPDGPIAKRFLTKNQTVAVVGDSVFVHGGLLAEHIEYGLERINEEVRGWINGFKGGRYAPAYCRGGNSVVWLRKFSEEMAHKCDCAALEHALSTIPGVKRMIMGHTIQDAGINGVCNDKAIRIDVGMSKGCADGLPEVLEIRRDSGVRIVTSNPLYKENLYSHVAPDSKTGLGLLVPVPKQVEVKA</sequence>
<comment type="function">
    <text evidence="2">Shows phosphatase activity, hydrolyzing the artificial substrate para-nitrophenylphosphate (pNPP) in vitro.</text>
</comment>
<comment type="cofactor">
    <cofactor evidence="2">
        <name>Mn(2+)</name>
        <dbReference type="ChEBI" id="CHEBI:29035"/>
    </cofactor>
    <text evidence="1">Binds 2 manganese ions per subunit.</text>
</comment>
<comment type="subcellular location">
    <subcellularLocation>
        <location evidence="2">Cytoplasm</location>
        <location evidence="2">Cytosol</location>
    </subcellularLocation>
</comment>
<comment type="tissue specificity">
    <text evidence="2">Expressed in roots and siliques (at protein level).</text>
</comment>
<comment type="induction">
    <text evidence="5">By infection with the bacterial pathogen P.syringae.</text>
</comment>
<comment type="disruption phenotype">
    <text evidence="2">No visible phenotype under normal growth conditions.</text>
</comment>
<comment type="similarity">
    <text evidence="4">Belongs to the metallophosphoesterase superfamily. SLP family.</text>
</comment>
<comment type="sequence caution" evidence="4">
    <conflict type="erroneous gene model prediction">
        <sequence resource="EMBL-CDS" id="AAF26001"/>
    </conflict>
    <text>The predicted gene has been split into 2 genes: At1g18480 and At1g18485.</text>
</comment>
<gene>
    <name evidence="3" type="primary">SLP2</name>
    <name type="ordered locus">At1g18480</name>
    <name type="ORF">F15H18.29</name>
    <name type="ORF">F15H18.4</name>
</gene>
<dbReference type="EC" id="3.1.-.-" evidence="4"/>
<dbReference type="EMBL" id="AC013354">
    <property type="protein sequence ID" value="AAF26001.1"/>
    <property type="status" value="ALT_SEQ"/>
    <property type="molecule type" value="Genomic_DNA"/>
</dbReference>
<dbReference type="EMBL" id="CP002684">
    <property type="protein sequence ID" value="AEE29719.1"/>
    <property type="molecule type" value="Genomic_DNA"/>
</dbReference>
<dbReference type="EMBL" id="AF428293">
    <property type="protein sequence ID" value="AAL16125.1"/>
    <property type="molecule type" value="mRNA"/>
</dbReference>
<dbReference type="EMBL" id="BT000488">
    <property type="protein sequence ID" value="AAN18057.1"/>
    <property type="molecule type" value="mRNA"/>
</dbReference>
<dbReference type="EMBL" id="AY084413">
    <property type="protein sequence ID" value="AAM60987.1"/>
    <property type="molecule type" value="mRNA"/>
</dbReference>
<dbReference type="PIR" id="E86318">
    <property type="entry name" value="E86318"/>
</dbReference>
<dbReference type="RefSeq" id="NP_564053.1">
    <property type="nucleotide sequence ID" value="NM_101705.2"/>
</dbReference>
<dbReference type="SMR" id="Q944L7"/>
<dbReference type="FunCoup" id="Q944L7">
    <property type="interactions" value="787"/>
</dbReference>
<dbReference type="STRING" id="3702.Q944L7"/>
<dbReference type="iPTMnet" id="Q944L7"/>
<dbReference type="SwissPalm" id="Q944L7"/>
<dbReference type="PaxDb" id="3702-AT1G18480.1"/>
<dbReference type="ProteomicsDB" id="232660"/>
<dbReference type="EnsemblPlants" id="AT1G18480.1">
    <property type="protein sequence ID" value="AT1G18480.1"/>
    <property type="gene ID" value="AT1G18480"/>
</dbReference>
<dbReference type="GeneID" id="838428"/>
<dbReference type="Gramene" id="AT1G18480.1">
    <property type="protein sequence ID" value="AT1G18480.1"/>
    <property type="gene ID" value="AT1G18480"/>
</dbReference>
<dbReference type="KEGG" id="ath:AT1G18480"/>
<dbReference type="Araport" id="AT1G18480"/>
<dbReference type="TAIR" id="AT1G18480">
    <property type="gene designation" value="SLP2"/>
</dbReference>
<dbReference type="eggNOG" id="KOG0374">
    <property type="taxonomic scope" value="Eukaryota"/>
</dbReference>
<dbReference type="HOGENOM" id="CLU_042543_1_1_1"/>
<dbReference type="InParanoid" id="Q944L7"/>
<dbReference type="OMA" id="NEVLWFM"/>
<dbReference type="PhylomeDB" id="Q944L7"/>
<dbReference type="PRO" id="PR:Q944L7"/>
<dbReference type="Proteomes" id="UP000006548">
    <property type="component" value="Chromosome 1"/>
</dbReference>
<dbReference type="ExpressionAtlas" id="Q944L7">
    <property type="expression patterns" value="baseline and differential"/>
</dbReference>
<dbReference type="GO" id="GO:0005829">
    <property type="term" value="C:cytosol"/>
    <property type="evidence" value="ECO:0000314"/>
    <property type="project" value="TAIR"/>
</dbReference>
<dbReference type="GO" id="GO:0030145">
    <property type="term" value="F:manganese ion binding"/>
    <property type="evidence" value="ECO:0000314"/>
    <property type="project" value="UniProtKB"/>
</dbReference>
<dbReference type="GO" id="GO:0016791">
    <property type="term" value="F:phosphatase activity"/>
    <property type="evidence" value="ECO:0000314"/>
    <property type="project" value="UniProtKB"/>
</dbReference>
<dbReference type="GO" id="GO:0004721">
    <property type="term" value="F:phosphoprotein phosphatase activity"/>
    <property type="evidence" value="ECO:0007669"/>
    <property type="project" value="UniProtKB-KW"/>
</dbReference>
<dbReference type="CDD" id="cd07425">
    <property type="entry name" value="MPP_Shelphs"/>
    <property type="match status" value="1"/>
</dbReference>
<dbReference type="Gene3D" id="3.60.21.10">
    <property type="match status" value="1"/>
</dbReference>
<dbReference type="InterPro" id="IPR004843">
    <property type="entry name" value="Calcineurin-like_PHP_ApaH"/>
</dbReference>
<dbReference type="InterPro" id="IPR029052">
    <property type="entry name" value="Metallo-depent_PP-like"/>
</dbReference>
<dbReference type="InterPro" id="IPR041787">
    <property type="entry name" value="MPP_Shelphs"/>
</dbReference>
<dbReference type="PANTHER" id="PTHR47680">
    <property type="entry name" value="SHEWANELLA-LIKE PROTEIN PHOSPHATASE 2"/>
    <property type="match status" value="1"/>
</dbReference>
<dbReference type="PANTHER" id="PTHR47680:SF2">
    <property type="entry name" value="SHEWANELLA-LIKE PROTEIN PHOSPHATASE 2"/>
    <property type="match status" value="1"/>
</dbReference>
<dbReference type="Pfam" id="PF00149">
    <property type="entry name" value="Metallophos"/>
    <property type="match status" value="1"/>
</dbReference>
<dbReference type="SUPFAM" id="SSF56300">
    <property type="entry name" value="Metallo-dependent phosphatases"/>
    <property type="match status" value="1"/>
</dbReference>
<feature type="chain" id="PRO_0000342697" description="Shewanella-like protein phosphatase 2">
    <location>
        <begin position="1"/>
        <end position="391"/>
    </location>
</feature>
<feature type="active site" description="Proton donor" evidence="1">
    <location>
        <position position="133"/>
    </location>
</feature>
<feature type="binding site" evidence="1">
    <location>
        <position position="61"/>
    </location>
    <ligand>
        <name>Mn(2+)</name>
        <dbReference type="ChEBI" id="CHEBI:29035"/>
        <label>1</label>
    </ligand>
</feature>
<feature type="binding site" evidence="1">
    <location>
        <position position="63"/>
    </location>
    <ligand>
        <name>Mn(2+)</name>
        <dbReference type="ChEBI" id="CHEBI:29035"/>
        <label>1</label>
    </ligand>
</feature>
<feature type="binding site" evidence="1">
    <location>
        <position position="97"/>
    </location>
    <ligand>
        <name>Mn(2+)</name>
        <dbReference type="ChEBI" id="CHEBI:29035"/>
        <label>1</label>
    </ligand>
</feature>
<feature type="binding site" evidence="1">
    <location>
        <position position="97"/>
    </location>
    <ligand>
        <name>Mn(2+)</name>
        <dbReference type="ChEBI" id="CHEBI:29035"/>
        <label>2</label>
    </ligand>
</feature>
<feature type="binding site" evidence="1">
    <location>
        <position position="132"/>
    </location>
    <ligand>
        <name>Mn(2+)</name>
        <dbReference type="ChEBI" id="CHEBI:29035"/>
        <label>2</label>
    </ligand>
</feature>
<feature type="binding site" evidence="1">
    <location>
        <position position="232"/>
    </location>
    <ligand>
        <name>Mn(2+)</name>
        <dbReference type="ChEBI" id="CHEBI:29035"/>
        <label>2</label>
    </ligand>
</feature>
<feature type="binding site" evidence="1">
    <location>
        <position position="295"/>
    </location>
    <ligand>
        <name>Mn(2+)</name>
        <dbReference type="ChEBI" id="CHEBI:29035"/>
        <label>2</label>
    </ligand>
</feature>
<feature type="sequence conflict" description="In Ref. 4; AAM60987." evidence="4" ref="4">
    <original>S</original>
    <variation>Y</variation>
    <location>
        <position position="20"/>
    </location>
</feature>
<feature type="sequence conflict" description="In Ref. 4; AAM60987." evidence="4" ref="4">
    <original>L</original>
    <variation>P</variation>
    <location>
        <position position="365"/>
    </location>
</feature>
<reference key="1">
    <citation type="journal article" date="2000" name="Nature">
        <title>Sequence and analysis of chromosome 1 of the plant Arabidopsis thaliana.</title>
        <authorList>
            <person name="Theologis A."/>
            <person name="Ecker J.R."/>
            <person name="Palm C.J."/>
            <person name="Federspiel N.A."/>
            <person name="Kaul S."/>
            <person name="White O."/>
            <person name="Alonso J."/>
            <person name="Altafi H."/>
            <person name="Araujo R."/>
            <person name="Bowman C.L."/>
            <person name="Brooks S.Y."/>
            <person name="Buehler E."/>
            <person name="Chan A."/>
            <person name="Chao Q."/>
            <person name="Chen H."/>
            <person name="Cheuk R.F."/>
            <person name="Chin C.W."/>
            <person name="Chung M.K."/>
            <person name="Conn L."/>
            <person name="Conway A.B."/>
            <person name="Conway A.R."/>
            <person name="Creasy T.H."/>
            <person name="Dewar K."/>
            <person name="Dunn P."/>
            <person name="Etgu P."/>
            <person name="Feldblyum T.V."/>
            <person name="Feng J.-D."/>
            <person name="Fong B."/>
            <person name="Fujii C.Y."/>
            <person name="Gill J.E."/>
            <person name="Goldsmith A.D."/>
            <person name="Haas B."/>
            <person name="Hansen N.F."/>
            <person name="Hughes B."/>
            <person name="Huizar L."/>
            <person name="Hunter J.L."/>
            <person name="Jenkins J."/>
            <person name="Johnson-Hopson C."/>
            <person name="Khan S."/>
            <person name="Khaykin E."/>
            <person name="Kim C.J."/>
            <person name="Koo H.L."/>
            <person name="Kremenetskaia I."/>
            <person name="Kurtz D.B."/>
            <person name="Kwan A."/>
            <person name="Lam B."/>
            <person name="Langin-Hooper S."/>
            <person name="Lee A."/>
            <person name="Lee J.M."/>
            <person name="Lenz C.A."/>
            <person name="Li J.H."/>
            <person name="Li Y.-P."/>
            <person name="Lin X."/>
            <person name="Liu S.X."/>
            <person name="Liu Z.A."/>
            <person name="Luros J.S."/>
            <person name="Maiti R."/>
            <person name="Marziali A."/>
            <person name="Militscher J."/>
            <person name="Miranda M."/>
            <person name="Nguyen M."/>
            <person name="Nierman W.C."/>
            <person name="Osborne B.I."/>
            <person name="Pai G."/>
            <person name="Peterson J."/>
            <person name="Pham P.K."/>
            <person name="Rizzo M."/>
            <person name="Rooney T."/>
            <person name="Rowley D."/>
            <person name="Sakano H."/>
            <person name="Salzberg S.L."/>
            <person name="Schwartz J.R."/>
            <person name="Shinn P."/>
            <person name="Southwick A.M."/>
            <person name="Sun H."/>
            <person name="Tallon L.J."/>
            <person name="Tambunga G."/>
            <person name="Toriumi M.J."/>
            <person name="Town C.D."/>
            <person name="Utterback T."/>
            <person name="Van Aken S."/>
            <person name="Vaysberg M."/>
            <person name="Vysotskaia V.S."/>
            <person name="Walker M."/>
            <person name="Wu D."/>
            <person name="Yu G."/>
            <person name="Fraser C.M."/>
            <person name="Venter J.C."/>
            <person name="Davis R.W."/>
        </authorList>
    </citation>
    <scope>NUCLEOTIDE SEQUENCE [LARGE SCALE GENOMIC DNA]</scope>
    <source>
        <strain>cv. Columbia</strain>
    </source>
</reference>
<reference key="2">
    <citation type="journal article" date="2017" name="Plant J.">
        <title>Araport11: a complete reannotation of the Arabidopsis thaliana reference genome.</title>
        <authorList>
            <person name="Cheng C.Y."/>
            <person name="Krishnakumar V."/>
            <person name="Chan A.P."/>
            <person name="Thibaud-Nissen F."/>
            <person name="Schobel S."/>
            <person name="Town C.D."/>
        </authorList>
    </citation>
    <scope>GENOME REANNOTATION</scope>
    <source>
        <strain>cv. Columbia</strain>
    </source>
</reference>
<reference key="3">
    <citation type="journal article" date="2003" name="Science">
        <title>Empirical analysis of transcriptional activity in the Arabidopsis genome.</title>
        <authorList>
            <person name="Yamada K."/>
            <person name="Lim J."/>
            <person name="Dale J.M."/>
            <person name="Chen H."/>
            <person name="Shinn P."/>
            <person name="Palm C.J."/>
            <person name="Southwick A.M."/>
            <person name="Wu H.C."/>
            <person name="Kim C.J."/>
            <person name="Nguyen M."/>
            <person name="Pham P.K."/>
            <person name="Cheuk R.F."/>
            <person name="Karlin-Newmann G."/>
            <person name="Liu S.X."/>
            <person name="Lam B."/>
            <person name="Sakano H."/>
            <person name="Wu T."/>
            <person name="Yu G."/>
            <person name="Miranda M."/>
            <person name="Quach H.L."/>
            <person name="Tripp M."/>
            <person name="Chang C.H."/>
            <person name="Lee J.M."/>
            <person name="Toriumi M.J."/>
            <person name="Chan M.M."/>
            <person name="Tang C.C."/>
            <person name="Onodera C.S."/>
            <person name="Deng J.M."/>
            <person name="Akiyama K."/>
            <person name="Ansari Y."/>
            <person name="Arakawa T."/>
            <person name="Banh J."/>
            <person name="Banno F."/>
            <person name="Bowser L."/>
            <person name="Brooks S.Y."/>
            <person name="Carninci P."/>
            <person name="Chao Q."/>
            <person name="Choy N."/>
            <person name="Enju A."/>
            <person name="Goldsmith A.D."/>
            <person name="Gurjal M."/>
            <person name="Hansen N.F."/>
            <person name="Hayashizaki Y."/>
            <person name="Johnson-Hopson C."/>
            <person name="Hsuan V.W."/>
            <person name="Iida K."/>
            <person name="Karnes M."/>
            <person name="Khan S."/>
            <person name="Koesema E."/>
            <person name="Ishida J."/>
            <person name="Jiang P.X."/>
            <person name="Jones T."/>
            <person name="Kawai J."/>
            <person name="Kamiya A."/>
            <person name="Meyers C."/>
            <person name="Nakajima M."/>
            <person name="Narusaka M."/>
            <person name="Seki M."/>
            <person name="Sakurai T."/>
            <person name="Satou M."/>
            <person name="Tamse R."/>
            <person name="Vaysberg M."/>
            <person name="Wallender E.K."/>
            <person name="Wong C."/>
            <person name="Yamamura Y."/>
            <person name="Yuan S."/>
            <person name="Shinozaki K."/>
            <person name="Davis R.W."/>
            <person name="Theologis A."/>
            <person name="Ecker J.R."/>
        </authorList>
    </citation>
    <scope>NUCLEOTIDE SEQUENCE [LARGE SCALE MRNA]</scope>
    <source>
        <strain>cv. Columbia</strain>
    </source>
</reference>
<reference key="4">
    <citation type="submission" date="2002-03" db="EMBL/GenBank/DDBJ databases">
        <title>Full-length cDNA from Arabidopsis thaliana.</title>
        <authorList>
            <person name="Brover V.V."/>
            <person name="Troukhan M.E."/>
            <person name="Alexandrov N.A."/>
            <person name="Lu Y.-P."/>
            <person name="Flavell R.B."/>
            <person name="Feldmann K.A."/>
        </authorList>
    </citation>
    <scope>NUCLEOTIDE SEQUENCE [LARGE SCALE MRNA]</scope>
</reference>
<reference key="5">
    <citation type="journal article" date="2011" name="Plant Physiol.">
        <title>Two ancient bacterial-like PPP family phosphatases from Arabidopsis are highly conserved plant proteins that possess unique properties.</title>
        <authorList>
            <person name="Uhrig R.G."/>
            <person name="Moorhead G.B."/>
        </authorList>
    </citation>
    <scope>FUNCTION</scope>
    <scope>COFACTOR</scope>
    <scope>SUBCELLULAR LOCATION</scope>
    <scope>TISSUE SPECIFICITY</scope>
    <scope>DISRUPTION PHENOTYPE</scope>
</reference>
<reference key="6">
    <citation type="journal article" date="2012" name="Funct. Integr. Genomics">
        <title>Prediction of biological functions of Shewanella-like protein phosphatases (Shelphs) across different domains of life.</title>
        <authorList>
            <person name="Kutuzov M.A."/>
            <person name="Andreeva A.V."/>
        </authorList>
    </citation>
    <scope>INDUCTION</scope>
</reference>
<keyword id="KW-0963">Cytoplasm</keyword>
<keyword id="KW-0378">Hydrolase</keyword>
<keyword id="KW-0464">Manganese</keyword>
<keyword id="KW-0479">Metal-binding</keyword>
<keyword id="KW-0904">Protein phosphatase</keyword>
<keyword id="KW-1185">Reference proteome</keyword>
<evidence type="ECO:0000250" key="1">
    <source>
        <dbReference type="UniProtKB" id="P36873"/>
    </source>
</evidence>
<evidence type="ECO:0000269" key="2">
    <source>
    </source>
</evidence>
<evidence type="ECO:0000303" key="3">
    <source>
    </source>
</evidence>
<evidence type="ECO:0000305" key="4"/>
<evidence type="ECO:0000305" key="5">
    <source>
    </source>
</evidence>
<organism>
    <name type="scientific">Arabidopsis thaliana</name>
    <name type="common">Mouse-ear cress</name>
    <dbReference type="NCBI Taxonomy" id="3702"/>
    <lineage>
        <taxon>Eukaryota</taxon>
        <taxon>Viridiplantae</taxon>
        <taxon>Streptophyta</taxon>
        <taxon>Embryophyta</taxon>
        <taxon>Tracheophyta</taxon>
        <taxon>Spermatophyta</taxon>
        <taxon>Magnoliopsida</taxon>
        <taxon>eudicotyledons</taxon>
        <taxon>Gunneridae</taxon>
        <taxon>Pentapetalae</taxon>
        <taxon>rosids</taxon>
        <taxon>malvids</taxon>
        <taxon>Brassicales</taxon>
        <taxon>Brassicaceae</taxon>
        <taxon>Camelineae</taxon>
        <taxon>Arabidopsis</taxon>
    </lineage>
</organism>
<proteinExistence type="evidence at protein level"/>
<name>SLP2_ARATH</name>